<reference key="1">
    <citation type="journal article" date="2000" name="Science">
        <title>Complete genome sequence of Neisseria meningitidis serogroup B strain MC58.</title>
        <authorList>
            <person name="Tettelin H."/>
            <person name="Saunders N.J."/>
            <person name="Heidelberg J.F."/>
            <person name="Jeffries A.C."/>
            <person name="Nelson K.E."/>
            <person name="Eisen J.A."/>
            <person name="Ketchum K.A."/>
            <person name="Hood D.W."/>
            <person name="Peden J.F."/>
            <person name="Dodson R.J."/>
            <person name="Nelson W.C."/>
            <person name="Gwinn M.L."/>
            <person name="DeBoy R.T."/>
            <person name="Peterson J.D."/>
            <person name="Hickey E.K."/>
            <person name="Haft D.H."/>
            <person name="Salzberg S.L."/>
            <person name="White O."/>
            <person name="Fleischmann R.D."/>
            <person name="Dougherty B.A."/>
            <person name="Mason T.M."/>
            <person name="Ciecko A."/>
            <person name="Parksey D.S."/>
            <person name="Blair E."/>
            <person name="Cittone H."/>
            <person name="Clark E.B."/>
            <person name="Cotton M.D."/>
            <person name="Utterback T.R."/>
            <person name="Khouri H.M."/>
            <person name="Qin H."/>
            <person name="Vamathevan J.J."/>
            <person name="Gill J."/>
            <person name="Scarlato V."/>
            <person name="Masignani V."/>
            <person name="Pizza M."/>
            <person name="Grandi G."/>
            <person name="Sun L."/>
            <person name="Smith H.O."/>
            <person name="Fraser C.M."/>
            <person name="Moxon E.R."/>
            <person name="Rappuoli R."/>
            <person name="Venter J.C."/>
        </authorList>
    </citation>
    <scope>NUCLEOTIDE SEQUENCE [LARGE SCALE GENOMIC DNA]</scope>
    <source>
        <strain>ATCC BAA-335 / MC58</strain>
    </source>
</reference>
<keyword id="KW-0963">Cytoplasm</keyword>
<keyword id="KW-1185">Reference proteome</keyword>
<feature type="chain" id="PRO_0000162454" description="Regulatory protein RecX">
    <location>
        <begin position="1"/>
        <end position="153"/>
    </location>
</feature>
<sequence>MKPQKSLRARAMDILSRQELSRIGLKRKLAPHAESEEELENVLNEFAERNWQSDLRYAEAYIRSKSRKHGSLRLKQALAQQGIDEETSRNLLPDRSSEKLAAIAVLRKKFKHPAADLKEKQKQARFLAYRGFDADTVQTALKHAWDDGWEEDC</sequence>
<name>RECX_NEIMB</name>
<gene>
    <name type="primary">recX</name>
    <name type="ordered locus">NMB1479</name>
</gene>
<comment type="function">
    <text evidence="1">Modulates RecA activity.</text>
</comment>
<comment type="subcellular location">
    <subcellularLocation>
        <location evidence="2">Cytoplasm</location>
    </subcellularLocation>
</comment>
<comment type="similarity">
    <text evidence="2">Belongs to the RecX family.</text>
</comment>
<dbReference type="EMBL" id="AE002098">
    <property type="protein sequence ID" value="AAF41835.1"/>
    <property type="molecule type" value="Genomic_DNA"/>
</dbReference>
<dbReference type="PIR" id="D81079">
    <property type="entry name" value="D81079"/>
</dbReference>
<dbReference type="RefSeq" id="NP_274487.1">
    <property type="nucleotide sequence ID" value="NC_003112.2"/>
</dbReference>
<dbReference type="RefSeq" id="WP_002225089.1">
    <property type="nucleotide sequence ID" value="NC_003112.2"/>
</dbReference>
<dbReference type="SMR" id="Q9JYQ3"/>
<dbReference type="FunCoup" id="Q9JYQ3">
    <property type="interactions" value="59"/>
</dbReference>
<dbReference type="STRING" id="122586.NMB1479"/>
<dbReference type="PaxDb" id="122586-NMB1479"/>
<dbReference type="KEGG" id="nme:NMB1479"/>
<dbReference type="PATRIC" id="fig|122586.8.peg.1871"/>
<dbReference type="HOGENOM" id="CLU_066607_3_1_4"/>
<dbReference type="InParanoid" id="Q9JYQ3"/>
<dbReference type="OrthoDB" id="5295441at2"/>
<dbReference type="Proteomes" id="UP000000425">
    <property type="component" value="Chromosome"/>
</dbReference>
<dbReference type="GO" id="GO:0005737">
    <property type="term" value="C:cytoplasm"/>
    <property type="evidence" value="ECO:0007669"/>
    <property type="project" value="UniProtKB-SubCell"/>
</dbReference>
<dbReference type="GO" id="GO:0006282">
    <property type="term" value="P:regulation of DNA repair"/>
    <property type="evidence" value="ECO:0007669"/>
    <property type="project" value="UniProtKB-UniRule"/>
</dbReference>
<dbReference type="Gene3D" id="1.10.10.10">
    <property type="entry name" value="Winged helix-like DNA-binding domain superfamily/Winged helix DNA-binding domain"/>
    <property type="match status" value="3"/>
</dbReference>
<dbReference type="HAMAP" id="MF_01114">
    <property type="entry name" value="RecX"/>
    <property type="match status" value="1"/>
</dbReference>
<dbReference type="InterPro" id="IPR053924">
    <property type="entry name" value="RecX_HTH_2nd"/>
</dbReference>
<dbReference type="InterPro" id="IPR053925">
    <property type="entry name" value="RecX_HTH_3rd"/>
</dbReference>
<dbReference type="InterPro" id="IPR003783">
    <property type="entry name" value="Regulatory_RecX"/>
</dbReference>
<dbReference type="InterPro" id="IPR036388">
    <property type="entry name" value="WH-like_DNA-bd_sf"/>
</dbReference>
<dbReference type="NCBIfam" id="NF001055">
    <property type="entry name" value="PRK00117.2-5"/>
    <property type="match status" value="1"/>
</dbReference>
<dbReference type="PANTHER" id="PTHR33602">
    <property type="entry name" value="REGULATORY PROTEIN RECX FAMILY PROTEIN"/>
    <property type="match status" value="1"/>
</dbReference>
<dbReference type="PANTHER" id="PTHR33602:SF1">
    <property type="entry name" value="REGULATORY PROTEIN RECX FAMILY PROTEIN"/>
    <property type="match status" value="1"/>
</dbReference>
<dbReference type="Pfam" id="PF02631">
    <property type="entry name" value="RecX_HTH2"/>
    <property type="match status" value="1"/>
</dbReference>
<dbReference type="Pfam" id="PF21981">
    <property type="entry name" value="RecX_HTH3"/>
    <property type="match status" value="1"/>
</dbReference>
<proteinExistence type="inferred from homology"/>
<accession>Q9JYQ3</accession>
<organism>
    <name type="scientific">Neisseria meningitidis serogroup B (strain ATCC BAA-335 / MC58)</name>
    <dbReference type="NCBI Taxonomy" id="122586"/>
    <lineage>
        <taxon>Bacteria</taxon>
        <taxon>Pseudomonadati</taxon>
        <taxon>Pseudomonadota</taxon>
        <taxon>Betaproteobacteria</taxon>
        <taxon>Neisseriales</taxon>
        <taxon>Neisseriaceae</taxon>
        <taxon>Neisseria</taxon>
    </lineage>
</organism>
<evidence type="ECO:0000250" key="1"/>
<evidence type="ECO:0000305" key="2"/>
<protein>
    <recommendedName>
        <fullName>Regulatory protein RecX</fullName>
    </recommendedName>
</protein>